<sequence>MPASQRLRLICGVDEAGRGPLCGPVVAAAVILDPARPIDGLADSKKLTERARDRLAPLIRERALAWAVAEASVEEIDRLNILHATMLAMQRAVSALSVLPGEVLIDGNRCPTLAVPARAVVGGDASEPAISAASILAKTVRDAGMKALHEQYPHYGLADHKGYPTAGHLAALRRHGIADFYRRSFGPVRELLQNPPLWVEEESA</sequence>
<accession>A1K6Q7</accession>
<comment type="function">
    <text evidence="1">Endonuclease that specifically degrades the RNA of RNA-DNA hybrids.</text>
</comment>
<comment type="catalytic activity">
    <reaction evidence="1">
        <text>Endonucleolytic cleavage to 5'-phosphomonoester.</text>
        <dbReference type="EC" id="3.1.26.4"/>
    </reaction>
</comment>
<comment type="cofactor">
    <cofactor evidence="1">
        <name>Mn(2+)</name>
        <dbReference type="ChEBI" id="CHEBI:29035"/>
    </cofactor>
    <cofactor evidence="1">
        <name>Mg(2+)</name>
        <dbReference type="ChEBI" id="CHEBI:18420"/>
    </cofactor>
    <text evidence="1">Manganese or magnesium. Binds 1 divalent metal ion per monomer in the absence of substrate. May bind a second metal ion after substrate binding.</text>
</comment>
<comment type="subcellular location">
    <subcellularLocation>
        <location evidence="1">Cytoplasm</location>
    </subcellularLocation>
</comment>
<comment type="similarity">
    <text evidence="1">Belongs to the RNase HII family.</text>
</comment>
<evidence type="ECO:0000255" key="1">
    <source>
        <dbReference type="HAMAP-Rule" id="MF_00052"/>
    </source>
</evidence>
<evidence type="ECO:0000255" key="2">
    <source>
        <dbReference type="PROSITE-ProRule" id="PRU01319"/>
    </source>
</evidence>
<name>RNH2_AZOSB</name>
<protein>
    <recommendedName>
        <fullName evidence="1">Ribonuclease HII</fullName>
        <shortName evidence="1">RNase HII</shortName>
        <ecNumber evidence="1">3.1.26.4</ecNumber>
    </recommendedName>
</protein>
<feature type="chain" id="PRO_1000031114" description="Ribonuclease HII">
    <location>
        <begin position="1"/>
        <end position="204"/>
    </location>
</feature>
<feature type="domain" description="RNase H type-2" evidence="2">
    <location>
        <begin position="8"/>
        <end position="197"/>
    </location>
</feature>
<feature type="binding site" evidence="1">
    <location>
        <position position="14"/>
    </location>
    <ligand>
        <name>a divalent metal cation</name>
        <dbReference type="ChEBI" id="CHEBI:60240"/>
    </ligand>
</feature>
<feature type="binding site" evidence="1">
    <location>
        <position position="15"/>
    </location>
    <ligand>
        <name>a divalent metal cation</name>
        <dbReference type="ChEBI" id="CHEBI:60240"/>
    </ligand>
</feature>
<feature type="binding site" evidence="1">
    <location>
        <position position="106"/>
    </location>
    <ligand>
        <name>a divalent metal cation</name>
        <dbReference type="ChEBI" id="CHEBI:60240"/>
    </ligand>
</feature>
<proteinExistence type="inferred from homology"/>
<dbReference type="EC" id="3.1.26.4" evidence="1"/>
<dbReference type="EMBL" id="AM406670">
    <property type="protein sequence ID" value="CAL94512.1"/>
    <property type="molecule type" value="Genomic_DNA"/>
</dbReference>
<dbReference type="RefSeq" id="WP_011765628.1">
    <property type="nucleotide sequence ID" value="NC_008702.1"/>
</dbReference>
<dbReference type="SMR" id="A1K6Q7"/>
<dbReference type="STRING" id="62928.azo1895"/>
<dbReference type="KEGG" id="aoa:dqs_2050"/>
<dbReference type="KEGG" id="azo:azo1895"/>
<dbReference type="eggNOG" id="COG0164">
    <property type="taxonomic scope" value="Bacteria"/>
</dbReference>
<dbReference type="HOGENOM" id="CLU_036532_3_2_4"/>
<dbReference type="OrthoDB" id="9803420at2"/>
<dbReference type="Proteomes" id="UP000002588">
    <property type="component" value="Chromosome"/>
</dbReference>
<dbReference type="GO" id="GO:0005737">
    <property type="term" value="C:cytoplasm"/>
    <property type="evidence" value="ECO:0007669"/>
    <property type="project" value="UniProtKB-SubCell"/>
</dbReference>
<dbReference type="GO" id="GO:0032299">
    <property type="term" value="C:ribonuclease H2 complex"/>
    <property type="evidence" value="ECO:0007669"/>
    <property type="project" value="TreeGrafter"/>
</dbReference>
<dbReference type="GO" id="GO:0030145">
    <property type="term" value="F:manganese ion binding"/>
    <property type="evidence" value="ECO:0007669"/>
    <property type="project" value="UniProtKB-UniRule"/>
</dbReference>
<dbReference type="GO" id="GO:0003723">
    <property type="term" value="F:RNA binding"/>
    <property type="evidence" value="ECO:0007669"/>
    <property type="project" value="InterPro"/>
</dbReference>
<dbReference type="GO" id="GO:0004523">
    <property type="term" value="F:RNA-DNA hybrid ribonuclease activity"/>
    <property type="evidence" value="ECO:0007669"/>
    <property type="project" value="UniProtKB-UniRule"/>
</dbReference>
<dbReference type="GO" id="GO:0043137">
    <property type="term" value="P:DNA replication, removal of RNA primer"/>
    <property type="evidence" value="ECO:0007669"/>
    <property type="project" value="TreeGrafter"/>
</dbReference>
<dbReference type="GO" id="GO:0006298">
    <property type="term" value="P:mismatch repair"/>
    <property type="evidence" value="ECO:0007669"/>
    <property type="project" value="TreeGrafter"/>
</dbReference>
<dbReference type="CDD" id="cd07182">
    <property type="entry name" value="RNase_HII_bacteria_HII_like"/>
    <property type="match status" value="1"/>
</dbReference>
<dbReference type="FunFam" id="3.30.420.10:FF:000006">
    <property type="entry name" value="Ribonuclease HII"/>
    <property type="match status" value="1"/>
</dbReference>
<dbReference type="Gene3D" id="3.30.420.10">
    <property type="entry name" value="Ribonuclease H-like superfamily/Ribonuclease H"/>
    <property type="match status" value="1"/>
</dbReference>
<dbReference type="HAMAP" id="MF_00052_B">
    <property type="entry name" value="RNase_HII_B"/>
    <property type="match status" value="1"/>
</dbReference>
<dbReference type="InterPro" id="IPR022898">
    <property type="entry name" value="RNase_HII"/>
</dbReference>
<dbReference type="InterPro" id="IPR001352">
    <property type="entry name" value="RNase_HII/HIII"/>
</dbReference>
<dbReference type="InterPro" id="IPR024567">
    <property type="entry name" value="RNase_HII/HIII_dom"/>
</dbReference>
<dbReference type="InterPro" id="IPR012337">
    <property type="entry name" value="RNaseH-like_sf"/>
</dbReference>
<dbReference type="InterPro" id="IPR036397">
    <property type="entry name" value="RNaseH_sf"/>
</dbReference>
<dbReference type="NCBIfam" id="NF000595">
    <property type="entry name" value="PRK00015.1-3"/>
    <property type="match status" value="1"/>
</dbReference>
<dbReference type="NCBIfam" id="NF000596">
    <property type="entry name" value="PRK00015.1-4"/>
    <property type="match status" value="1"/>
</dbReference>
<dbReference type="PANTHER" id="PTHR10954">
    <property type="entry name" value="RIBONUCLEASE H2 SUBUNIT A"/>
    <property type="match status" value="1"/>
</dbReference>
<dbReference type="PANTHER" id="PTHR10954:SF18">
    <property type="entry name" value="RIBONUCLEASE HII"/>
    <property type="match status" value="1"/>
</dbReference>
<dbReference type="Pfam" id="PF01351">
    <property type="entry name" value="RNase_HII"/>
    <property type="match status" value="1"/>
</dbReference>
<dbReference type="SUPFAM" id="SSF53098">
    <property type="entry name" value="Ribonuclease H-like"/>
    <property type="match status" value="1"/>
</dbReference>
<dbReference type="PROSITE" id="PS51975">
    <property type="entry name" value="RNASE_H_2"/>
    <property type="match status" value="1"/>
</dbReference>
<reference key="1">
    <citation type="journal article" date="2006" name="Nat. Biotechnol.">
        <title>Complete genome of the mutualistic, N2-fixing grass endophyte Azoarcus sp. strain BH72.</title>
        <authorList>
            <person name="Krause A."/>
            <person name="Ramakumar A."/>
            <person name="Bartels D."/>
            <person name="Battistoni F."/>
            <person name="Bekel T."/>
            <person name="Boch J."/>
            <person name="Boehm M."/>
            <person name="Friedrich F."/>
            <person name="Hurek T."/>
            <person name="Krause L."/>
            <person name="Linke B."/>
            <person name="McHardy A.C."/>
            <person name="Sarkar A."/>
            <person name="Schneiker S."/>
            <person name="Syed A.A."/>
            <person name="Thauer R."/>
            <person name="Vorhoelter F.-J."/>
            <person name="Weidner S."/>
            <person name="Puehler A."/>
            <person name="Reinhold-Hurek B."/>
            <person name="Kaiser O."/>
            <person name="Goesmann A."/>
        </authorList>
    </citation>
    <scope>NUCLEOTIDE SEQUENCE [LARGE SCALE GENOMIC DNA]</scope>
    <source>
        <strain>BH72</strain>
    </source>
</reference>
<organism>
    <name type="scientific">Azoarcus sp. (strain BH72)</name>
    <dbReference type="NCBI Taxonomy" id="418699"/>
    <lineage>
        <taxon>Bacteria</taxon>
        <taxon>Pseudomonadati</taxon>
        <taxon>Pseudomonadota</taxon>
        <taxon>Betaproteobacteria</taxon>
        <taxon>Rhodocyclales</taxon>
        <taxon>Zoogloeaceae</taxon>
        <taxon>Azoarcus</taxon>
    </lineage>
</organism>
<keyword id="KW-0963">Cytoplasm</keyword>
<keyword id="KW-0255">Endonuclease</keyword>
<keyword id="KW-0378">Hydrolase</keyword>
<keyword id="KW-0464">Manganese</keyword>
<keyword id="KW-0479">Metal-binding</keyword>
<keyword id="KW-0540">Nuclease</keyword>
<keyword id="KW-1185">Reference proteome</keyword>
<gene>
    <name evidence="1" type="primary">rnhB</name>
    <name type="ordered locus">azo1895</name>
</gene>